<keyword id="KW-0963">Cytoplasm</keyword>
<keyword id="KW-0456">Lyase</keyword>
<keyword id="KW-0816">Tricarboxylic acid cycle</keyword>
<reference key="1">
    <citation type="journal article" date="2005" name="J. Bacteriol.">
        <title>Insights on evolution of virulence and resistance from the complete genome analysis of an early methicillin-resistant Staphylococcus aureus strain and a biofilm-producing methicillin-resistant Staphylococcus epidermidis strain.</title>
        <authorList>
            <person name="Gill S.R."/>
            <person name="Fouts D.E."/>
            <person name="Archer G.L."/>
            <person name="Mongodin E.F."/>
            <person name="DeBoy R.T."/>
            <person name="Ravel J."/>
            <person name="Paulsen I.T."/>
            <person name="Kolonay J.F."/>
            <person name="Brinkac L.M."/>
            <person name="Beanan M.J."/>
            <person name="Dodson R.J."/>
            <person name="Daugherty S.C."/>
            <person name="Madupu R."/>
            <person name="Angiuoli S.V."/>
            <person name="Durkin A.S."/>
            <person name="Haft D.H."/>
            <person name="Vamathevan J.J."/>
            <person name="Khouri H."/>
            <person name="Utterback T.R."/>
            <person name="Lee C."/>
            <person name="Dimitrov G."/>
            <person name="Jiang L."/>
            <person name="Qin H."/>
            <person name="Weidman J."/>
            <person name="Tran K."/>
            <person name="Kang K.H."/>
            <person name="Hance I.R."/>
            <person name="Nelson K.E."/>
            <person name="Fraser C.M."/>
        </authorList>
    </citation>
    <scope>NUCLEOTIDE SEQUENCE [LARGE SCALE GENOMIC DNA]</scope>
    <source>
        <strain>COL</strain>
    </source>
</reference>
<protein>
    <recommendedName>
        <fullName evidence="1">Fumarate hydratase class II</fullName>
        <shortName evidence="1">Fumarase C</shortName>
        <ecNumber evidence="1">4.2.1.2</ecNumber>
    </recommendedName>
    <alternativeName>
        <fullName evidence="1">Aerobic fumarase</fullName>
    </alternativeName>
    <alternativeName>
        <fullName evidence="1">Iron-independent fumarase</fullName>
    </alternativeName>
</protein>
<accession>Q5HES4</accession>
<name>FUMC_STAAC</name>
<dbReference type="EC" id="4.2.1.2" evidence="1"/>
<dbReference type="EMBL" id="CP000046">
    <property type="protein sequence ID" value="AAW36920.1"/>
    <property type="molecule type" value="Genomic_DNA"/>
</dbReference>
<dbReference type="RefSeq" id="WP_000116224.1">
    <property type="nucleotide sequence ID" value="NZ_JBGOFO010000011.1"/>
</dbReference>
<dbReference type="SMR" id="Q5HES4"/>
<dbReference type="KEGG" id="sac:SACOL1908"/>
<dbReference type="HOGENOM" id="CLU_021594_4_1_9"/>
<dbReference type="UniPathway" id="UPA00223">
    <property type="reaction ID" value="UER01007"/>
</dbReference>
<dbReference type="Proteomes" id="UP000000530">
    <property type="component" value="Chromosome"/>
</dbReference>
<dbReference type="GO" id="GO:0005737">
    <property type="term" value="C:cytoplasm"/>
    <property type="evidence" value="ECO:0007669"/>
    <property type="project" value="UniProtKB-SubCell"/>
</dbReference>
<dbReference type="GO" id="GO:0004333">
    <property type="term" value="F:fumarate hydratase activity"/>
    <property type="evidence" value="ECO:0007669"/>
    <property type="project" value="UniProtKB-UniRule"/>
</dbReference>
<dbReference type="GO" id="GO:0006106">
    <property type="term" value="P:fumarate metabolic process"/>
    <property type="evidence" value="ECO:0007669"/>
    <property type="project" value="InterPro"/>
</dbReference>
<dbReference type="GO" id="GO:0006108">
    <property type="term" value="P:malate metabolic process"/>
    <property type="evidence" value="ECO:0007669"/>
    <property type="project" value="TreeGrafter"/>
</dbReference>
<dbReference type="GO" id="GO:0006099">
    <property type="term" value="P:tricarboxylic acid cycle"/>
    <property type="evidence" value="ECO:0007669"/>
    <property type="project" value="UniProtKB-UniRule"/>
</dbReference>
<dbReference type="CDD" id="cd01362">
    <property type="entry name" value="Fumarase_classII"/>
    <property type="match status" value="1"/>
</dbReference>
<dbReference type="FunFam" id="1.10.40.30:FF:000002">
    <property type="entry name" value="Fumarate hydratase class II"/>
    <property type="match status" value="1"/>
</dbReference>
<dbReference type="FunFam" id="1.10.275.10:FF:000001">
    <property type="entry name" value="Fumarate hydratase, mitochondrial"/>
    <property type="match status" value="1"/>
</dbReference>
<dbReference type="FunFam" id="1.20.200.10:FF:000001">
    <property type="entry name" value="Fumarate hydratase, mitochondrial"/>
    <property type="match status" value="1"/>
</dbReference>
<dbReference type="Gene3D" id="1.10.40.30">
    <property type="entry name" value="Fumarase/aspartase (C-terminal domain)"/>
    <property type="match status" value="1"/>
</dbReference>
<dbReference type="Gene3D" id="1.20.200.10">
    <property type="entry name" value="Fumarase/aspartase (Central domain)"/>
    <property type="match status" value="1"/>
</dbReference>
<dbReference type="Gene3D" id="1.10.275.10">
    <property type="entry name" value="Fumarase/aspartase (N-terminal domain)"/>
    <property type="match status" value="1"/>
</dbReference>
<dbReference type="HAMAP" id="MF_00743">
    <property type="entry name" value="FumaraseC"/>
    <property type="match status" value="1"/>
</dbReference>
<dbReference type="InterPro" id="IPR005677">
    <property type="entry name" value="Fum_hydII"/>
</dbReference>
<dbReference type="InterPro" id="IPR024083">
    <property type="entry name" value="Fumarase/histidase_N"/>
</dbReference>
<dbReference type="InterPro" id="IPR018951">
    <property type="entry name" value="Fumarase_C_C"/>
</dbReference>
<dbReference type="InterPro" id="IPR020557">
    <property type="entry name" value="Fumarate_lyase_CS"/>
</dbReference>
<dbReference type="InterPro" id="IPR000362">
    <property type="entry name" value="Fumarate_lyase_fam"/>
</dbReference>
<dbReference type="InterPro" id="IPR022761">
    <property type="entry name" value="Fumarate_lyase_N"/>
</dbReference>
<dbReference type="InterPro" id="IPR008948">
    <property type="entry name" value="L-Aspartase-like"/>
</dbReference>
<dbReference type="NCBIfam" id="TIGR00979">
    <property type="entry name" value="fumC_II"/>
    <property type="match status" value="1"/>
</dbReference>
<dbReference type="NCBIfam" id="NF008909">
    <property type="entry name" value="PRK12273.1"/>
    <property type="match status" value="1"/>
</dbReference>
<dbReference type="PANTHER" id="PTHR11444">
    <property type="entry name" value="ASPARTATEAMMONIA/ARGININOSUCCINATE/ADENYLOSUCCINATE LYASE"/>
    <property type="match status" value="1"/>
</dbReference>
<dbReference type="PANTHER" id="PTHR11444:SF1">
    <property type="entry name" value="FUMARATE HYDRATASE, MITOCHONDRIAL"/>
    <property type="match status" value="1"/>
</dbReference>
<dbReference type="Pfam" id="PF10415">
    <property type="entry name" value="FumaraseC_C"/>
    <property type="match status" value="1"/>
</dbReference>
<dbReference type="Pfam" id="PF00206">
    <property type="entry name" value="Lyase_1"/>
    <property type="match status" value="1"/>
</dbReference>
<dbReference type="PRINTS" id="PR00145">
    <property type="entry name" value="ARGSUCLYASE"/>
</dbReference>
<dbReference type="PRINTS" id="PR00149">
    <property type="entry name" value="FUMRATELYASE"/>
</dbReference>
<dbReference type="SUPFAM" id="SSF48557">
    <property type="entry name" value="L-aspartase-like"/>
    <property type="match status" value="1"/>
</dbReference>
<dbReference type="PROSITE" id="PS00163">
    <property type="entry name" value="FUMARATE_LYASES"/>
    <property type="match status" value="1"/>
</dbReference>
<gene>
    <name evidence="1" type="primary">fumC</name>
    <name type="synonym">citG</name>
    <name type="ordered locus">SACOL1908</name>
</gene>
<sequence length="461" mass="51108">MSVRIEHDTFGEIEVPADKYWGAQTERSKRNFPVGKERMPIEVVYGFAQLKRAAAIANFDLGKLSEAKKDAIVYACDQILSGELDEHFPLVVWQTGSGTQSNMNVNEVVSYVANMYLKDHQSDESIHPNDDVNKSQSSNDTFPTAMHVALYQEVETKLEPALKLLRNTLKEKEDKFDSIIKIGRTHLQDATPIKLGQEISGWRYMLDRCETMLSESKKHILNLAIGGTAVGTGINAHPEFGDKVAHYISENTGYPFVSSENKFHALTAHDEVVQLHGTLKALAGDLMKIANDVRWLASGPRAGLAEISIPENEPGSSIMPGKVNPTQCEMLTMVAVQVMGNDTVVGFASSQGNFELNVYKPVIMHNTLQSIYLLADGMETFNNNCAVGIEPIEENIDNYLNQSLMLVTALNPHIGYEKAAQIAKKAHKEGLTLKESAIQTGYVTEEQFEAWIKPEDMVDPH</sequence>
<proteinExistence type="inferred from homology"/>
<comment type="function">
    <text evidence="1">Involved in the TCA cycle. Catalyzes the stereospecific interconversion of fumarate to L-malate.</text>
</comment>
<comment type="catalytic activity">
    <reaction evidence="1">
        <text>(S)-malate = fumarate + H2O</text>
        <dbReference type="Rhea" id="RHEA:12460"/>
        <dbReference type="ChEBI" id="CHEBI:15377"/>
        <dbReference type="ChEBI" id="CHEBI:15589"/>
        <dbReference type="ChEBI" id="CHEBI:29806"/>
        <dbReference type="EC" id="4.2.1.2"/>
    </reaction>
</comment>
<comment type="pathway">
    <text evidence="1">Carbohydrate metabolism; tricarboxylic acid cycle; (S)-malate from fumarate: step 1/1.</text>
</comment>
<comment type="subunit">
    <text evidence="1">Homotetramer.</text>
</comment>
<comment type="subcellular location">
    <subcellularLocation>
        <location evidence="1">Cytoplasm</location>
    </subcellularLocation>
</comment>
<comment type="miscellaneous">
    <text evidence="1">There are 2 substrate-binding sites: the catalytic A site, and the non-catalytic B site that may play a role in the transfer of substrate or product between the active site and the solvent. Alternatively, the B site may bind allosteric effectors.</text>
</comment>
<comment type="similarity">
    <text evidence="1">Belongs to the class-II fumarase/aspartase family. Fumarase subfamily.</text>
</comment>
<evidence type="ECO:0000255" key="1">
    <source>
        <dbReference type="HAMAP-Rule" id="MF_00743"/>
    </source>
</evidence>
<feature type="chain" id="PRO_0000161311" description="Fumarate hydratase class II">
    <location>
        <begin position="1"/>
        <end position="461"/>
    </location>
</feature>
<feature type="active site" description="Proton donor/acceptor" evidence="1">
    <location>
        <position position="186"/>
    </location>
</feature>
<feature type="active site" evidence="1">
    <location>
        <position position="316"/>
    </location>
</feature>
<feature type="binding site" evidence="1">
    <location>
        <begin position="97"/>
        <end position="99"/>
    </location>
    <ligand>
        <name>substrate</name>
    </ligand>
</feature>
<feature type="binding site" description="in site B" evidence="1">
    <location>
        <begin position="127"/>
        <end position="130"/>
    </location>
    <ligand>
        <name>substrate</name>
    </ligand>
</feature>
<feature type="binding site" evidence="1">
    <location>
        <begin position="137"/>
        <end position="139"/>
    </location>
    <ligand>
        <name>substrate</name>
    </ligand>
</feature>
<feature type="binding site" evidence="1">
    <location>
        <position position="185"/>
    </location>
    <ligand>
        <name>substrate</name>
    </ligand>
</feature>
<feature type="binding site" evidence="1">
    <location>
        <position position="317"/>
    </location>
    <ligand>
        <name>substrate</name>
    </ligand>
</feature>
<feature type="binding site" evidence="1">
    <location>
        <begin position="322"/>
        <end position="324"/>
    </location>
    <ligand>
        <name>substrate</name>
    </ligand>
</feature>
<feature type="site" description="Important for catalytic activity" evidence="1">
    <location>
        <position position="329"/>
    </location>
</feature>
<organism>
    <name type="scientific">Staphylococcus aureus (strain COL)</name>
    <dbReference type="NCBI Taxonomy" id="93062"/>
    <lineage>
        <taxon>Bacteria</taxon>
        <taxon>Bacillati</taxon>
        <taxon>Bacillota</taxon>
        <taxon>Bacilli</taxon>
        <taxon>Bacillales</taxon>
        <taxon>Staphylococcaceae</taxon>
        <taxon>Staphylococcus</taxon>
    </lineage>
</organism>